<organism>
    <name type="scientific">Rosmarinus officinalis</name>
    <name type="common">Rosemary</name>
    <name type="synonym">Salvia rosmarinus</name>
    <dbReference type="NCBI Taxonomy" id="39367"/>
    <lineage>
        <taxon>Eukaryota</taxon>
        <taxon>Viridiplantae</taxon>
        <taxon>Streptophyta</taxon>
        <taxon>Embryophyta</taxon>
        <taxon>Tracheophyta</taxon>
        <taxon>Spermatophyta</taxon>
        <taxon>Magnoliopsida</taxon>
        <taxon>eudicotyledons</taxon>
        <taxon>Gunneridae</taxon>
        <taxon>Pentapetalae</taxon>
        <taxon>asterids</taxon>
        <taxon>lamiids</taxon>
        <taxon>Lamiales</taxon>
        <taxon>Lamiaceae</taxon>
        <taxon>Nepetoideae</taxon>
        <taxon>Mentheae</taxon>
        <taxon>Salviinae</taxon>
        <taxon>Salvia</taxon>
        <taxon>Salvia subgen. Rosmarinus</taxon>
    </lineage>
</organism>
<reference key="1">
    <citation type="journal article" date="2015" name="PLoS ONE">
        <title>Towards elucidating carnosic acid biosynthesis in Lamiaceae: Functional characterization of the three first steps of the pathway in Salvia fruticosa and Rosmarinus officinalis.</title>
        <authorList>
            <person name="Bozic D."/>
            <person name="Papaefthimiou D."/>
            <person name="Brueckner K."/>
            <person name="de Vos R.C."/>
            <person name="Tsoleridis C.A."/>
            <person name="Katsarou D."/>
            <person name="Papanikolaou A."/>
            <person name="Pateraki I."/>
            <person name="Chatzopoulou F.M."/>
            <person name="Dimitriadou E."/>
            <person name="Kostas S."/>
            <person name="Manzano D."/>
            <person name="Scheler U."/>
            <person name="Ferrer A."/>
            <person name="Tissier A."/>
            <person name="Makris A.M."/>
            <person name="Kampranis S.C."/>
            <person name="Kanellis A.K."/>
        </authorList>
    </citation>
    <scope>NUCLEOTIDE SEQUENCE [MRNA]</scope>
    <scope>FUNCTION</scope>
    <scope>CATALYTIC ACTIVITY</scope>
    <scope>TISSUE SPECIFICITY</scope>
    <source>
        <tissue>Trichome gland</tissue>
    </source>
</reference>
<reference key="2">
    <citation type="journal article" date="2016" name="Nat. Commun.">
        <title>Elucidation of the biosynthesis of carnosic acid and its reconstitution in yeast.</title>
        <authorList>
            <person name="Scheler U."/>
            <person name="Brandt W."/>
            <person name="Porzel A."/>
            <person name="Rothe K."/>
            <person name="Manzano D."/>
            <person name="Bozic D."/>
            <person name="Papaefthimiou D."/>
            <person name="Balcke G.U."/>
            <person name="Henning A."/>
            <person name="Lohse S."/>
            <person name="Marillonnet S."/>
            <person name="Kanellis A.K."/>
            <person name="Ferrer A."/>
            <person name="Tissier A."/>
        </authorList>
    </citation>
    <scope>FUNCTION</scope>
    <scope>CATALYTIC ACTIVITY</scope>
    <scope>MUTAGENESIS OF GLU-301; SER-303 AND PHE-478</scope>
</reference>
<reference key="3">
    <citation type="journal article" date="2019" name="Nat. Prod. Rep.">
        <title>Non-volatile natural products in plant glandular trichomes: chemistry, biological activities and biosynthesis.</title>
        <authorList>
            <person name="Liu Y."/>
            <person name="Jing S.-X."/>
            <person name="Luo S.-H."/>
            <person name="Li S.-H."/>
        </authorList>
    </citation>
    <scope>PATHWAY</scope>
    <scope>REVIEW</scope>
</reference>
<sequence length="493" mass="56009">MDSFPLLAALFFILAATWFISFRRPRNLPPGPFPYPIVGNMLQLGTQPHETFAKLSKKYGPLMSIHLGSLYTVIVSSPEMAKEIMHKYGQVFSGRTVAQAVHACGHDKISMGFLPVGGEWRDMRKICKEQMFSHQSMEDSQWLRKQKLQQLLEYAQKCSERGRAIDIREAAFITTLNLMSATLFSMQATEFDSKVTMEFKEIIEGVASIVGVPNFADYFPILRPFDPQGVKRRADVYFGRLLAIIEGFLNERVESRRTNPNAPKKDDFLETLVDTLQTNDNKLKTDHLTHLMLDLFVGGSETSTTEIEWIMWELLANPEKMAKMKAELKSVMGEEKVVDESQMPRLPYLQAVVKESMRLHPPGPLLLPRKAESDQVVNGYLIPKGAQVLINAWAIGRDHSIWKNPDSFEPERFLDQKIDFKGTDYELIPFGSGRRVCPGMPLANRILHTVTATLVHNFDWKLERPEASDAHRGVLFGFAVRRAVPLKIVPFKV</sequence>
<keyword id="KW-0349">Heme</keyword>
<keyword id="KW-0408">Iron</keyword>
<keyword id="KW-0472">Membrane</keyword>
<keyword id="KW-0479">Metal-binding</keyword>
<keyword id="KW-0503">Monooxygenase</keyword>
<keyword id="KW-0560">Oxidoreductase</keyword>
<keyword id="KW-0812">Transmembrane</keyword>
<keyword id="KW-1133">Transmembrane helix</keyword>
<accession>A0A0C5Q4Y6</accession>
<proteinExistence type="evidence at protein level"/>
<dbReference type="EC" id="1.14.14.175" evidence="4"/>
<dbReference type="EC" id="1.14.14.-" evidence="1"/>
<dbReference type="EC" id="1.14.14.60" evidence="5"/>
<dbReference type="EMBL" id="KP091843">
    <property type="protein sequence ID" value="AJQ30187.1"/>
    <property type="molecule type" value="mRNA"/>
</dbReference>
<dbReference type="SMR" id="A0A0C5Q4Y6"/>
<dbReference type="KEGG" id="ag:AJQ30187"/>
<dbReference type="BRENDA" id="1.14.14.175">
    <property type="organism ID" value="13767"/>
</dbReference>
<dbReference type="UniPathway" id="UPA00213"/>
<dbReference type="GO" id="GO:0016020">
    <property type="term" value="C:membrane"/>
    <property type="evidence" value="ECO:0007669"/>
    <property type="project" value="UniProtKB-SubCell"/>
</dbReference>
<dbReference type="GO" id="GO:0020037">
    <property type="term" value="F:heme binding"/>
    <property type="evidence" value="ECO:0007669"/>
    <property type="project" value="InterPro"/>
</dbReference>
<dbReference type="GO" id="GO:0005506">
    <property type="term" value="F:iron ion binding"/>
    <property type="evidence" value="ECO:0007669"/>
    <property type="project" value="InterPro"/>
</dbReference>
<dbReference type="GO" id="GO:0016712">
    <property type="term" value="F:oxidoreductase activity, acting on paired donors, with incorporation or reduction of molecular oxygen, reduced flavin or flavoprotein as one donor, and incorporation of one atom of oxygen"/>
    <property type="evidence" value="ECO:0000314"/>
    <property type="project" value="UniProtKB"/>
</dbReference>
<dbReference type="GO" id="GO:0016102">
    <property type="term" value="P:diterpenoid biosynthetic process"/>
    <property type="evidence" value="ECO:0000314"/>
    <property type="project" value="UniProtKB"/>
</dbReference>
<dbReference type="CDD" id="cd11073">
    <property type="entry name" value="CYP76-like"/>
    <property type="match status" value="1"/>
</dbReference>
<dbReference type="FunFam" id="1.10.630.10:FF:000007">
    <property type="entry name" value="Cytochrome P450 76C4"/>
    <property type="match status" value="1"/>
</dbReference>
<dbReference type="Gene3D" id="1.10.630.10">
    <property type="entry name" value="Cytochrome P450"/>
    <property type="match status" value="1"/>
</dbReference>
<dbReference type="InterPro" id="IPR001128">
    <property type="entry name" value="Cyt_P450"/>
</dbReference>
<dbReference type="InterPro" id="IPR017972">
    <property type="entry name" value="Cyt_P450_CS"/>
</dbReference>
<dbReference type="InterPro" id="IPR002401">
    <property type="entry name" value="Cyt_P450_E_grp-I"/>
</dbReference>
<dbReference type="InterPro" id="IPR036396">
    <property type="entry name" value="Cyt_P450_sf"/>
</dbReference>
<dbReference type="PANTHER" id="PTHR47950">
    <property type="entry name" value="CYTOCHROME P450, FAMILY 76, SUBFAMILY C, POLYPEPTIDE 5-RELATED"/>
    <property type="match status" value="1"/>
</dbReference>
<dbReference type="PANTHER" id="PTHR47950:SF4">
    <property type="entry name" value="GERANIOL 8-HYDROXYLASE-LIKE"/>
    <property type="match status" value="1"/>
</dbReference>
<dbReference type="Pfam" id="PF00067">
    <property type="entry name" value="p450"/>
    <property type="match status" value="1"/>
</dbReference>
<dbReference type="PRINTS" id="PR00463">
    <property type="entry name" value="EP450I"/>
</dbReference>
<dbReference type="PRINTS" id="PR00385">
    <property type="entry name" value="P450"/>
</dbReference>
<dbReference type="SUPFAM" id="SSF48264">
    <property type="entry name" value="Cytochrome P450"/>
    <property type="match status" value="1"/>
</dbReference>
<dbReference type="PROSITE" id="PS00086">
    <property type="entry name" value="CYTOCHROME_P450"/>
    <property type="match status" value="1"/>
</dbReference>
<feature type="chain" id="PRO_0000452580" description="Ferruginol synthase 1">
    <location>
        <begin position="1"/>
        <end position="493"/>
    </location>
</feature>
<feature type="transmembrane region" description="Helical" evidence="3">
    <location>
        <begin position="2"/>
        <end position="22"/>
    </location>
</feature>
<feature type="binding site" description="axial binding residue" evidence="2">
    <location>
        <position position="437"/>
    </location>
    <ligand>
        <name>heme</name>
        <dbReference type="ChEBI" id="CHEBI:30413"/>
    </ligand>
    <ligandPart>
        <name>Fe</name>
        <dbReference type="ChEBI" id="CHEBI:18248"/>
    </ligandPart>
</feature>
<feature type="mutagenesis site" description="Loss of ferruginol monooxygenase activity; when associated with N-303 and V-478." evidence="5">
    <original>E</original>
    <variation>D</variation>
    <location>
        <position position="301"/>
    </location>
</feature>
<feature type="mutagenesis site" description="Loss of ferruginol monooxygenase activity; when associated with D-301 and V-478." evidence="5">
    <original>S</original>
    <variation>N</variation>
    <location>
        <position position="303"/>
    </location>
</feature>
<feature type="mutagenesis site" description="Loss of ferruginol monooxygenase activity; when associated withD-301 and N-303." evidence="5">
    <original>F</original>
    <variation>V</variation>
    <location>
        <position position="478"/>
    </location>
</feature>
<gene>
    <name evidence="7" type="primary">CYP76AH22</name>
    <name evidence="6" type="synonym">FS1</name>
    <name evidence="7" type="synonym">HFS</name>
</gene>
<evidence type="ECO:0000250" key="1">
    <source>
        <dbReference type="UniProtKB" id="A0A0S1TP26"/>
    </source>
</evidence>
<evidence type="ECO:0000250" key="2">
    <source>
        <dbReference type="UniProtKB" id="Q94IP1"/>
    </source>
</evidence>
<evidence type="ECO:0000255" key="3"/>
<evidence type="ECO:0000269" key="4">
    <source>
    </source>
</evidence>
<evidence type="ECO:0000269" key="5">
    <source>
    </source>
</evidence>
<evidence type="ECO:0000303" key="6">
    <source>
    </source>
</evidence>
<evidence type="ECO:0000303" key="7">
    <source>
    </source>
</evidence>
<evidence type="ECO:0000305" key="8"/>
<evidence type="ECO:0000305" key="9">
    <source>
    </source>
</evidence>
<protein>
    <recommendedName>
        <fullName evidence="6">Ferruginol synthase 1</fullName>
        <shortName evidence="6">RoFS1</shortName>
        <ecNumber evidence="4">1.14.14.175</ecNumber>
    </recommendedName>
    <alternativeName>
        <fullName evidence="8">11-oxomiltiradiene synthase</fullName>
        <ecNumber evidence="1">1.14.14.-</ecNumber>
    </alternativeName>
    <alternativeName>
        <fullName evidence="7">Cytochrome P450 76AH22</fullName>
    </alternativeName>
    <alternativeName>
        <fullName evidence="8">Ferruginol monooxygenase</fullName>
        <shortName evidence="7">11-hydroxyferruginol synthase</shortName>
        <ecNumber evidence="5">1.14.14.60</ecNumber>
    </alternativeName>
    <alternativeName>
        <fullName evidence="8">Miltiradiene oxidase</fullName>
    </alternativeName>
</protein>
<comment type="function">
    <text evidence="1 4 5">Monooxygenase involved in the biosynthesis of labdane-related diterpenes natural products (PubMed:26020634, PubMed:27703160). Catalyzes the oxidation of abietatriene to produce ferruginol (PubMed:26020634, PubMed:27703160). Catalyzes the oxidation of ferruginol at C-12 to produce 11-hydroxyferruginol (PubMed:27703160). Ferruginol and 11-hydroxyferruginol are intermediates in the biosynthesis of carnosate, a potent antioxidant (PubMed:26020634, PubMed:27703160). May also convert miltiradiene into 11-oxomiltiradiene (By similarity).</text>
</comment>
<comment type="catalytic activity">
    <reaction evidence="4 5">
        <text>abieta-8,11,13-triene + reduced [NADPH--hemoprotein reductase] + O2 = ferruginol + oxidized [NADPH--hemoprotein reductase] + H2O + H(+)</text>
        <dbReference type="Rhea" id="RHEA:48080"/>
        <dbReference type="Rhea" id="RHEA-COMP:11964"/>
        <dbReference type="Rhea" id="RHEA-COMP:11965"/>
        <dbReference type="ChEBI" id="CHEBI:15377"/>
        <dbReference type="ChEBI" id="CHEBI:15378"/>
        <dbReference type="ChEBI" id="CHEBI:15379"/>
        <dbReference type="ChEBI" id="CHEBI:57618"/>
        <dbReference type="ChEBI" id="CHEBI:58210"/>
        <dbReference type="ChEBI" id="CHEBI:78274"/>
        <dbReference type="ChEBI" id="CHEBI:86062"/>
        <dbReference type="EC" id="1.14.14.175"/>
    </reaction>
    <physiologicalReaction direction="left-to-right" evidence="4 5">
        <dbReference type="Rhea" id="RHEA:48081"/>
    </physiologicalReaction>
</comment>
<comment type="catalytic activity">
    <reaction evidence="5">
        <text>ferruginol + reduced [NADPH--hemoprotein reductase] + O2 = 11-hydroxyferruginol + oxidized [NADPH--hemoprotein reductase] + H2O + H(+)</text>
        <dbReference type="Rhea" id="RHEA:55428"/>
        <dbReference type="Rhea" id="RHEA-COMP:11964"/>
        <dbReference type="Rhea" id="RHEA-COMP:11965"/>
        <dbReference type="ChEBI" id="CHEBI:15377"/>
        <dbReference type="ChEBI" id="CHEBI:15378"/>
        <dbReference type="ChEBI" id="CHEBI:15379"/>
        <dbReference type="ChEBI" id="CHEBI:57618"/>
        <dbReference type="ChEBI" id="CHEBI:58210"/>
        <dbReference type="ChEBI" id="CHEBI:78274"/>
        <dbReference type="ChEBI" id="CHEBI:138942"/>
        <dbReference type="EC" id="1.14.14.60"/>
    </reaction>
    <physiologicalReaction direction="left-to-right" evidence="5">
        <dbReference type="Rhea" id="RHEA:55429"/>
    </physiologicalReaction>
</comment>
<comment type="catalytic activity">
    <reaction evidence="1">
        <text>miltiradiene + 2 reduced [NADPH--hemoprotein reductase] + 2 O2 = 11-oxomiltiradiene + 2 oxidized [NADPH--hemoprotein reductase] + 3 H2O + 2 H(+)</text>
        <dbReference type="Rhea" id="RHEA:66796"/>
        <dbReference type="Rhea" id="RHEA-COMP:11964"/>
        <dbReference type="Rhea" id="RHEA-COMP:11965"/>
        <dbReference type="ChEBI" id="CHEBI:15377"/>
        <dbReference type="ChEBI" id="CHEBI:15378"/>
        <dbReference type="ChEBI" id="CHEBI:15379"/>
        <dbReference type="ChEBI" id="CHEBI:57618"/>
        <dbReference type="ChEBI" id="CHEBI:58210"/>
        <dbReference type="ChEBI" id="CHEBI:65037"/>
        <dbReference type="ChEBI" id="CHEBI:167496"/>
    </reaction>
    <physiologicalReaction direction="left-to-right" evidence="1">
        <dbReference type="Rhea" id="RHEA:66797"/>
    </physiologicalReaction>
</comment>
<comment type="cofactor">
    <cofactor evidence="2">
        <name>heme</name>
        <dbReference type="ChEBI" id="CHEBI:30413"/>
    </cofactor>
</comment>
<comment type="pathway">
    <text evidence="9">Secondary metabolite biosynthesis; terpenoid biosynthesis.</text>
</comment>
<comment type="subcellular location">
    <subcellularLocation>
        <location evidence="3">Membrane</location>
        <topology evidence="3">Single-pass membrane protein</topology>
    </subcellularLocation>
</comment>
<comment type="tissue specificity">
    <text evidence="4">Expressed in leaf glandular trichomes.</text>
</comment>
<comment type="similarity">
    <text evidence="8">Belongs to the cytochrome P450 family.</text>
</comment>
<name>C76H2_ROSOF</name>